<sequence>MAKLHDKYKETVIAELSKKFGYTSVMQVPRIEKITLNMGVGEAVADKKVMEHALRDMTAIAGQKPVVTVARKSVAGFKIRDGYPIGCKVTLRGERMWEFLERLVDIAIPRIRDFRGLSAKSFDGRGNYAMGVREQIIFPEIDYDKIDKIRGMDIVITTTAKNDEEGRALLDAFNFPFKK</sequence>
<gene>
    <name evidence="1" type="primary">rplE</name>
    <name type="ordered locus">Shew_0170</name>
</gene>
<name>RL5_SHELP</name>
<dbReference type="EMBL" id="CP000606">
    <property type="protein sequence ID" value="ABO22042.1"/>
    <property type="molecule type" value="Genomic_DNA"/>
</dbReference>
<dbReference type="RefSeq" id="WP_011863978.1">
    <property type="nucleotide sequence ID" value="NC_009092.1"/>
</dbReference>
<dbReference type="SMR" id="A3Q994"/>
<dbReference type="STRING" id="323850.Shew_0170"/>
<dbReference type="KEGG" id="slo:Shew_0170"/>
<dbReference type="eggNOG" id="COG0094">
    <property type="taxonomic scope" value="Bacteria"/>
</dbReference>
<dbReference type="HOGENOM" id="CLU_061015_2_1_6"/>
<dbReference type="OrthoDB" id="9806626at2"/>
<dbReference type="Proteomes" id="UP000001558">
    <property type="component" value="Chromosome"/>
</dbReference>
<dbReference type="GO" id="GO:1990904">
    <property type="term" value="C:ribonucleoprotein complex"/>
    <property type="evidence" value="ECO:0007669"/>
    <property type="project" value="UniProtKB-KW"/>
</dbReference>
<dbReference type="GO" id="GO:0005840">
    <property type="term" value="C:ribosome"/>
    <property type="evidence" value="ECO:0007669"/>
    <property type="project" value="UniProtKB-KW"/>
</dbReference>
<dbReference type="GO" id="GO:0019843">
    <property type="term" value="F:rRNA binding"/>
    <property type="evidence" value="ECO:0007669"/>
    <property type="project" value="UniProtKB-UniRule"/>
</dbReference>
<dbReference type="GO" id="GO:0003735">
    <property type="term" value="F:structural constituent of ribosome"/>
    <property type="evidence" value="ECO:0007669"/>
    <property type="project" value="InterPro"/>
</dbReference>
<dbReference type="GO" id="GO:0000049">
    <property type="term" value="F:tRNA binding"/>
    <property type="evidence" value="ECO:0007669"/>
    <property type="project" value="UniProtKB-UniRule"/>
</dbReference>
<dbReference type="GO" id="GO:0006412">
    <property type="term" value="P:translation"/>
    <property type="evidence" value="ECO:0007669"/>
    <property type="project" value="UniProtKB-UniRule"/>
</dbReference>
<dbReference type="FunFam" id="3.30.1440.10:FF:000001">
    <property type="entry name" value="50S ribosomal protein L5"/>
    <property type="match status" value="1"/>
</dbReference>
<dbReference type="Gene3D" id="3.30.1440.10">
    <property type="match status" value="1"/>
</dbReference>
<dbReference type="HAMAP" id="MF_01333_B">
    <property type="entry name" value="Ribosomal_uL5_B"/>
    <property type="match status" value="1"/>
</dbReference>
<dbReference type="InterPro" id="IPR002132">
    <property type="entry name" value="Ribosomal_uL5"/>
</dbReference>
<dbReference type="InterPro" id="IPR020930">
    <property type="entry name" value="Ribosomal_uL5_bac-type"/>
</dbReference>
<dbReference type="InterPro" id="IPR031309">
    <property type="entry name" value="Ribosomal_uL5_C"/>
</dbReference>
<dbReference type="InterPro" id="IPR020929">
    <property type="entry name" value="Ribosomal_uL5_CS"/>
</dbReference>
<dbReference type="InterPro" id="IPR022803">
    <property type="entry name" value="Ribosomal_uL5_dom_sf"/>
</dbReference>
<dbReference type="InterPro" id="IPR031310">
    <property type="entry name" value="Ribosomal_uL5_N"/>
</dbReference>
<dbReference type="NCBIfam" id="NF000585">
    <property type="entry name" value="PRK00010.1"/>
    <property type="match status" value="1"/>
</dbReference>
<dbReference type="PANTHER" id="PTHR11994">
    <property type="entry name" value="60S RIBOSOMAL PROTEIN L11-RELATED"/>
    <property type="match status" value="1"/>
</dbReference>
<dbReference type="Pfam" id="PF00281">
    <property type="entry name" value="Ribosomal_L5"/>
    <property type="match status" value="1"/>
</dbReference>
<dbReference type="Pfam" id="PF00673">
    <property type="entry name" value="Ribosomal_L5_C"/>
    <property type="match status" value="1"/>
</dbReference>
<dbReference type="PIRSF" id="PIRSF002161">
    <property type="entry name" value="Ribosomal_L5"/>
    <property type="match status" value="1"/>
</dbReference>
<dbReference type="SUPFAM" id="SSF55282">
    <property type="entry name" value="RL5-like"/>
    <property type="match status" value="1"/>
</dbReference>
<dbReference type="PROSITE" id="PS00358">
    <property type="entry name" value="RIBOSOMAL_L5"/>
    <property type="match status" value="1"/>
</dbReference>
<reference key="1">
    <citation type="submission" date="2007-03" db="EMBL/GenBank/DDBJ databases">
        <title>Complete sequence of Shewanella loihica PV-4.</title>
        <authorList>
            <consortium name="US DOE Joint Genome Institute"/>
            <person name="Copeland A."/>
            <person name="Lucas S."/>
            <person name="Lapidus A."/>
            <person name="Barry K."/>
            <person name="Detter J.C."/>
            <person name="Glavina del Rio T."/>
            <person name="Hammon N."/>
            <person name="Israni S."/>
            <person name="Dalin E."/>
            <person name="Tice H."/>
            <person name="Pitluck S."/>
            <person name="Chain P."/>
            <person name="Malfatti S."/>
            <person name="Shin M."/>
            <person name="Vergez L."/>
            <person name="Schmutz J."/>
            <person name="Larimer F."/>
            <person name="Land M."/>
            <person name="Hauser L."/>
            <person name="Kyrpides N."/>
            <person name="Mikhailova N."/>
            <person name="Romine M.F."/>
            <person name="Serres G."/>
            <person name="Fredrickson J."/>
            <person name="Tiedje J."/>
            <person name="Richardson P."/>
        </authorList>
    </citation>
    <scope>NUCLEOTIDE SEQUENCE [LARGE SCALE GENOMIC DNA]</scope>
    <source>
        <strain>ATCC BAA-1088 / PV-4</strain>
    </source>
</reference>
<proteinExistence type="inferred from homology"/>
<feature type="chain" id="PRO_1000052824" description="Large ribosomal subunit protein uL5">
    <location>
        <begin position="1"/>
        <end position="179"/>
    </location>
</feature>
<keyword id="KW-1185">Reference proteome</keyword>
<keyword id="KW-0687">Ribonucleoprotein</keyword>
<keyword id="KW-0689">Ribosomal protein</keyword>
<keyword id="KW-0694">RNA-binding</keyword>
<keyword id="KW-0699">rRNA-binding</keyword>
<keyword id="KW-0820">tRNA-binding</keyword>
<protein>
    <recommendedName>
        <fullName evidence="1">Large ribosomal subunit protein uL5</fullName>
    </recommendedName>
    <alternativeName>
        <fullName evidence="2">50S ribosomal protein L5</fullName>
    </alternativeName>
</protein>
<evidence type="ECO:0000255" key="1">
    <source>
        <dbReference type="HAMAP-Rule" id="MF_01333"/>
    </source>
</evidence>
<evidence type="ECO:0000305" key="2"/>
<comment type="function">
    <text evidence="1">This is one of the proteins that bind and probably mediate the attachment of the 5S RNA into the large ribosomal subunit, where it forms part of the central protuberance. In the 70S ribosome it contacts protein S13 of the 30S subunit (bridge B1b), connecting the 2 subunits; this bridge is implicated in subunit movement. Contacts the P site tRNA; the 5S rRNA and some of its associated proteins might help stabilize positioning of ribosome-bound tRNAs.</text>
</comment>
<comment type="subunit">
    <text evidence="1">Part of the 50S ribosomal subunit; part of the 5S rRNA/L5/L18/L25 subcomplex. Contacts the 5S rRNA and the P site tRNA. Forms a bridge to the 30S subunit in the 70S ribosome.</text>
</comment>
<comment type="similarity">
    <text evidence="1">Belongs to the universal ribosomal protein uL5 family.</text>
</comment>
<organism>
    <name type="scientific">Shewanella loihica (strain ATCC BAA-1088 / PV-4)</name>
    <dbReference type="NCBI Taxonomy" id="323850"/>
    <lineage>
        <taxon>Bacteria</taxon>
        <taxon>Pseudomonadati</taxon>
        <taxon>Pseudomonadota</taxon>
        <taxon>Gammaproteobacteria</taxon>
        <taxon>Alteromonadales</taxon>
        <taxon>Shewanellaceae</taxon>
        <taxon>Shewanella</taxon>
    </lineage>
</organism>
<accession>A3Q994</accession>